<proteinExistence type="inferred from homology"/>
<dbReference type="EC" id="2.1.1.220"/>
<dbReference type="EMBL" id="CR382132">
    <property type="protein sequence ID" value="CAG78574.1"/>
    <property type="molecule type" value="Genomic_DNA"/>
</dbReference>
<dbReference type="RefSeq" id="XP_505763.1">
    <property type="nucleotide sequence ID" value="XM_505763.1"/>
</dbReference>
<dbReference type="SMR" id="Q6C0P9"/>
<dbReference type="FunCoup" id="Q6C0P9">
    <property type="interactions" value="656"/>
</dbReference>
<dbReference type="STRING" id="284591.Q6C0P9"/>
<dbReference type="EnsemblFungi" id="CAG78574">
    <property type="protein sequence ID" value="CAG78574"/>
    <property type="gene ID" value="YALI0_F22737g"/>
</dbReference>
<dbReference type="KEGG" id="yli:2908809"/>
<dbReference type="VEuPathDB" id="FungiDB:YALI0_F22737g"/>
<dbReference type="HOGENOM" id="CLU_025402_4_0_1"/>
<dbReference type="InParanoid" id="Q6C0P9"/>
<dbReference type="OMA" id="RPDHRMI"/>
<dbReference type="OrthoDB" id="7957at4891"/>
<dbReference type="Proteomes" id="UP000001300">
    <property type="component" value="Chromosome F"/>
</dbReference>
<dbReference type="GO" id="GO:0005634">
    <property type="term" value="C:nucleus"/>
    <property type="evidence" value="ECO:0000318"/>
    <property type="project" value="GO_Central"/>
</dbReference>
<dbReference type="GO" id="GO:0031515">
    <property type="term" value="C:tRNA (m1A) methyltransferase complex"/>
    <property type="evidence" value="ECO:0000318"/>
    <property type="project" value="GO_Central"/>
</dbReference>
<dbReference type="GO" id="GO:0160107">
    <property type="term" value="F:tRNA (adenine(58)-N1)-methyltransferase activity"/>
    <property type="evidence" value="ECO:0007669"/>
    <property type="project" value="UniProtKB-EC"/>
</dbReference>
<dbReference type="GO" id="GO:0030488">
    <property type="term" value="P:tRNA methylation"/>
    <property type="evidence" value="ECO:0000318"/>
    <property type="project" value="GO_Central"/>
</dbReference>
<dbReference type="Gene3D" id="3.10.330.20">
    <property type="match status" value="1"/>
</dbReference>
<dbReference type="Gene3D" id="3.40.50.150">
    <property type="entry name" value="Vaccinia Virus protein VP39"/>
    <property type="match status" value="1"/>
</dbReference>
<dbReference type="InterPro" id="IPR029063">
    <property type="entry name" value="SAM-dependent_MTases_sf"/>
</dbReference>
<dbReference type="InterPro" id="IPR049470">
    <property type="entry name" value="TRM61_C"/>
</dbReference>
<dbReference type="InterPro" id="IPR014816">
    <property type="entry name" value="tRNA_MeTrfase_Gcd14"/>
</dbReference>
<dbReference type="PANTHER" id="PTHR12133">
    <property type="entry name" value="TRNA (ADENINE(58)-N(1))-METHYLTRANSFERASE"/>
    <property type="match status" value="1"/>
</dbReference>
<dbReference type="PANTHER" id="PTHR12133:SF2">
    <property type="entry name" value="TRNA (ADENINE(58)-N(1))-METHYLTRANSFERASE CATALYTIC SUBUNIT TRMT61A"/>
    <property type="match status" value="1"/>
</dbReference>
<dbReference type="Pfam" id="PF08704">
    <property type="entry name" value="GCD14"/>
    <property type="match status" value="1"/>
</dbReference>
<dbReference type="PIRSF" id="PIRSF017269">
    <property type="entry name" value="GCD14"/>
    <property type="match status" value="1"/>
</dbReference>
<dbReference type="SUPFAM" id="SSF53335">
    <property type="entry name" value="S-adenosyl-L-methionine-dependent methyltransferases"/>
    <property type="match status" value="1"/>
</dbReference>
<dbReference type="PROSITE" id="PS51620">
    <property type="entry name" value="SAM_TRM61"/>
    <property type="match status" value="1"/>
</dbReference>
<keyword id="KW-0489">Methyltransferase</keyword>
<keyword id="KW-0539">Nucleus</keyword>
<keyword id="KW-1185">Reference proteome</keyword>
<keyword id="KW-0949">S-adenosyl-L-methionine</keyword>
<keyword id="KW-0808">Transferase</keyword>
<keyword id="KW-0819">tRNA processing</keyword>
<gene>
    <name type="primary">TRM61</name>
    <name type="ordered locus">YALI0F22737g</name>
</gene>
<organism>
    <name type="scientific">Yarrowia lipolytica (strain CLIB 122 / E 150)</name>
    <name type="common">Yeast</name>
    <name type="synonym">Candida lipolytica</name>
    <dbReference type="NCBI Taxonomy" id="284591"/>
    <lineage>
        <taxon>Eukaryota</taxon>
        <taxon>Fungi</taxon>
        <taxon>Dikarya</taxon>
        <taxon>Ascomycota</taxon>
        <taxon>Saccharomycotina</taxon>
        <taxon>Dipodascomycetes</taxon>
        <taxon>Dipodascales</taxon>
        <taxon>Dipodascales incertae sedis</taxon>
        <taxon>Yarrowia</taxon>
    </lineage>
</organism>
<feature type="chain" id="PRO_0000256176" description="tRNA (adenine(58)-N(1))-methyltransferase catalytic subunit TRM61">
    <location>
        <begin position="1"/>
        <end position="389"/>
    </location>
</feature>
<feature type="region of interest" description="Disordered" evidence="4">
    <location>
        <begin position="278"/>
        <end position="313"/>
    </location>
</feature>
<feature type="region of interest" description="Disordered" evidence="4">
    <location>
        <begin position="364"/>
        <end position="389"/>
    </location>
</feature>
<feature type="compositionally biased region" description="Acidic residues" evidence="4">
    <location>
        <begin position="280"/>
        <end position="289"/>
    </location>
</feature>
<feature type="compositionally biased region" description="Basic and acidic residues" evidence="4">
    <location>
        <begin position="290"/>
        <end position="301"/>
    </location>
</feature>
<feature type="compositionally biased region" description="Low complexity" evidence="4">
    <location>
        <begin position="368"/>
        <end position="389"/>
    </location>
</feature>
<feature type="binding site" evidence="2">
    <location>
        <begin position="112"/>
        <end position="114"/>
    </location>
    <ligand>
        <name>S-adenosyl-L-methionine</name>
        <dbReference type="ChEBI" id="CHEBI:59789"/>
    </ligand>
</feature>
<feature type="binding site" evidence="2 3">
    <location>
        <position position="133"/>
    </location>
    <ligand>
        <name>S-adenosyl-L-methionine</name>
        <dbReference type="ChEBI" id="CHEBI:59789"/>
    </ligand>
</feature>
<feature type="binding site" evidence="2">
    <location>
        <position position="138"/>
    </location>
    <ligand>
        <name>S-adenosyl-L-methionine</name>
        <dbReference type="ChEBI" id="CHEBI:59789"/>
    </ligand>
</feature>
<feature type="binding site" evidence="2">
    <location>
        <begin position="160"/>
        <end position="161"/>
    </location>
    <ligand>
        <name>S-adenosyl-L-methionine</name>
        <dbReference type="ChEBI" id="CHEBI:59789"/>
    </ligand>
</feature>
<feature type="binding site" evidence="2 3">
    <location>
        <position position="181"/>
    </location>
    <ligand>
        <name>S-adenosyl-L-methionine</name>
        <dbReference type="ChEBI" id="CHEBI:59789"/>
    </ligand>
</feature>
<reference key="1">
    <citation type="journal article" date="2004" name="Nature">
        <title>Genome evolution in yeasts.</title>
        <authorList>
            <person name="Dujon B."/>
            <person name="Sherman D."/>
            <person name="Fischer G."/>
            <person name="Durrens P."/>
            <person name="Casaregola S."/>
            <person name="Lafontaine I."/>
            <person name="de Montigny J."/>
            <person name="Marck C."/>
            <person name="Neuveglise C."/>
            <person name="Talla E."/>
            <person name="Goffard N."/>
            <person name="Frangeul L."/>
            <person name="Aigle M."/>
            <person name="Anthouard V."/>
            <person name="Babour A."/>
            <person name="Barbe V."/>
            <person name="Barnay S."/>
            <person name="Blanchin S."/>
            <person name="Beckerich J.-M."/>
            <person name="Beyne E."/>
            <person name="Bleykasten C."/>
            <person name="Boisrame A."/>
            <person name="Boyer J."/>
            <person name="Cattolico L."/>
            <person name="Confanioleri F."/>
            <person name="de Daruvar A."/>
            <person name="Despons L."/>
            <person name="Fabre E."/>
            <person name="Fairhead C."/>
            <person name="Ferry-Dumazet H."/>
            <person name="Groppi A."/>
            <person name="Hantraye F."/>
            <person name="Hennequin C."/>
            <person name="Jauniaux N."/>
            <person name="Joyet P."/>
            <person name="Kachouri R."/>
            <person name="Kerrest A."/>
            <person name="Koszul R."/>
            <person name="Lemaire M."/>
            <person name="Lesur I."/>
            <person name="Ma L."/>
            <person name="Muller H."/>
            <person name="Nicaud J.-M."/>
            <person name="Nikolski M."/>
            <person name="Oztas S."/>
            <person name="Ozier-Kalogeropoulos O."/>
            <person name="Pellenz S."/>
            <person name="Potier S."/>
            <person name="Richard G.-F."/>
            <person name="Straub M.-L."/>
            <person name="Suleau A."/>
            <person name="Swennen D."/>
            <person name="Tekaia F."/>
            <person name="Wesolowski-Louvel M."/>
            <person name="Westhof E."/>
            <person name="Wirth B."/>
            <person name="Zeniou-Meyer M."/>
            <person name="Zivanovic Y."/>
            <person name="Bolotin-Fukuhara M."/>
            <person name="Thierry A."/>
            <person name="Bouchier C."/>
            <person name="Caudron B."/>
            <person name="Scarpelli C."/>
            <person name="Gaillardin C."/>
            <person name="Weissenbach J."/>
            <person name="Wincker P."/>
            <person name="Souciet J.-L."/>
        </authorList>
    </citation>
    <scope>NUCLEOTIDE SEQUENCE [LARGE SCALE GENOMIC DNA]</scope>
    <source>
        <strain>CLIB 122 / E 150</strain>
    </source>
</reference>
<accession>Q6C0P9</accession>
<comment type="function">
    <text evidence="1">Catalytic subunit of tRNA (adenine-N(1)-)-methyltransferase, which catalyzes the formation of N(1)-methyladenine at position 58 (m1A58) in initiator methionyl-tRNA.</text>
</comment>
<comment type="catalytic activity">
    <reaction evidence="3">
        <text>adenosine(58) in tRNA + S-adenosyl-L-methionine = N(1)-methyladenosine(58) in tRNA + S-adenosyl-L-homocysteine + H(+)</text>
        <dbReference type="Rhea" id="RHEA:43152"/>
        <dbReference type="Rhea" id="RHEA-COMP:10365"/>
        <dbReference type="Rhea" id="RHEA-COMP:10366"/>
        <dbReference type="ChEBI" id="CHEBI:15378"/>
        <dbReference type="ChEBI" id="CHEBI:57856"/>
        <dbReference type="ChEBI" id="CHEBI:59789"/>
        <dbReference type="ChEBI" id="CHEBI:74411"/>
        <dbReference type="ChEBI" id="CHEBI:74491"/>
        <dbReference type="EC" id="2.1.1.220"/>
    </reaction>
</comment>
<comment type="subunit">
    <text evidence="1">Heterotetramer; composed of two copies of TRM6 and two copies of TRM61.</text>
</comment>
<comment type="subcellular location">
    <subcellularLocation>
        <location evidence="1">Nucleus</location>
    </subcellularLocation>
</comment>
<comment type="similarity">
    <text evidence="3">Belongs to the class I-like SAM-binding methyltransferase superfamily. TRM61 family.</text>
</comment>
<name>TRM61_YARLI</name>
<evidence type="ECO:0000250" key="1">
    <source>
        <dbReference type="UniProtKB" id="P46959"/>
    </source>
</evidence>
<evidence type="ECO:0000250" key="2">
    <source>
        <dbReference type="UniProtKB" id="Q96FX7"/>
    </source>
</evidence>
<evidence type="ECO:0000255" key="3">
    <source>
        <dbReference type="PROSITE-ProRule" id="PRU00952"/>
    </source>
</evidence>
<evidence type="ECO:0000256" key="4">
    <source>
        <dbReference type="SAM" id="MobiDB-lite"/>
    </source>
</evidence>
<protein>
    <recommendedName>
        <fullName>tRNA (adenine(58)-N(1))-methyltransferase catalytic subunit TRM61</fullName>
        <ecNumber>2.1.1.220</ecNumber>
    </recommendedName>
    <alternativeName>
        <fullName>tRNA(m1A58)-methyltransferase subunit TRM61</fullName>
        <shortName>tRNA(m1A58)MTase subunit TRM61</shortName>
    </alternativeName>
</protein>
<sequence length="389" mass="44103">MFSAYKDTIEDGDLVLGWMTRTAIKPIVVEKKEGLFNTRYGAFPHRNMDKYGAQLGSMSKQGFIHLIHPTPELWTLSLPHRTQIVYTTDSSYIVQRLKIRPGSTVIESGTGSGSFTHAISRSAGLAGKVYSYEFHEERYNLAKQEFERHQLTNVIPTHRDVCNDGFDIENIDVNATAVFLDLPAPWTAIPHLERVIDRSVVSRVCCFSPCFEQVVKAVQALQEAGWVDIEMVEVAAKRWESRLEMKRSLDEAITRLRDVKARRETGLAKRNARIKVETETGVEEEESDERDAKRSKTESGHRGYNPWGKGQKIKEGDESFEWTEVSKCEQEIKSHTSYLLFASRLPKLGEEVFDKDMCVRPYSERCPETSTEGAEASTEATEAPARTEA</sequence>